<evidence type="ECO:0000255" key="1">
    <source>
        <dbReference type="HAMAP-Rule" id="MF_02007"/>
    </source>
</evidence>
<reference key="1">
    <citation type="journal article" date="2005" name="Proc. Natl. Acad. Sci. U.S.A.">
        <title>Comparison of the complete genome sequences of Pseudomonas syringae pv. syringae B728a and pv. tomato DC3000.</title>
        <authorList>
            <person name="Feil H."/>
            <person name="Feil W.S."/>
            <person name="Chain P."/>
            <person name="Larimer F."/>
            <person name="Dibartolo G."/>
            <person name="Copeland A."/>
            <person name="Lykidis A."/>
            <person name="Trong S."/>
            <person name="Nolan M."/>
            <person name="Goltsman E."/>
            <person name="Thiel J."/>
            <person name="Malfatti S."/>
            <person name="Loper J.E."/>
            <person name="Lapidus A."/>
            <person name="Detter J.C."/>
            <person name="Land M."/>
            <person name="Richardson P.M."/>
            <person name="Kyrpides N.C."/>
            <person name="Ivanova N."/>
            <person name="Lindow S.E."/>
        </authorList>
    </citation>
    <scope>NUCLEOTIDE SEQUENCE [LARGE SCALE GENOMIC DNA]</scope>
    <source>
        <strain>B728a</strain>
    </source>
</reference>
<feature type="chain" id="PRO_0000236755" description="Tyrosine--tRNA ligase">
    <location>
        <begin position="1"/>
        <end position="403"/>
    </location>
</feature>
<feature type="domain" description="S4 RNA-binding" evidence="1">
    <location>
        <begin position="336"/>
        <end position="396"/>
    </location>
</feature>
<feature type="short sequence motif" description="'HIGH' region">
    <location>
        <begin position="42"/>
        <end position="51"/>
    </location>
</feature>
<feature type="short sequence motif" description="'KMSKS' region">
    <location>
        <begin position="226"/>
        <end position="230"/>
    </location>
</feature>
<feature type="binding site" evidence="1">
    <location>
        <position position="229"/>
    </location>
    <ligand>
        <name>ATP</name>
        <dbReference type="ChEBI" id="CHEBI:30616"/>
    </ligand>
</feature>
<keyword id="KW-0030">Aminoacyl-tRNA synthetase</keyword>
<keyword id="KW-0067">ATP-binding</keyword>
<keyword id="KW-0963">Cytoplasm</keyword>
<keyword id="KW-0436">Ligase</keyword>
<keyword id="KW-0547">Nucleotide-binding</keyword>
<keyword id="KW-0648">Protein biosynthesis</keyword>
<keyword id="KW-0694">RNA-binding</keyword>
<accession>Q4ZMM7</accession>
<gene>
    <name evidence="1" type="primary">tyrS</name>
    <name type="ordered locus">Psyr_4565</name>
</gene>
<protein>
    <recommendedName>
        <fullName evidence="1">Tyrosine--tRNA ligase</fullName>
        <ecNumber evidence="1">6.1.1.1</ecNumber>
    </recommendedName>
    <alternativeName>
        <fullName evidence="1">Tyrosyl-tRNA synthetase</fullName>
        <shortName evidence="1">TyrRS</shortName>
    </alternativeName>
</protein>
<proteinExistence type="inferred from homology"/>
<sequence length="403" mass="44549">MKSVEEQLALIKRGADELLVEAELVEKLKRGQPLRIKAGFDPTAPDLHLGHTVLINKLRQFQDLGHQIIFLIGDFTGMIGDPSGKSATRPPLTREQVLDYAETYKSQVFKILDPAKTEVAFNSTWMDQLSPADFIRLSSQYTVARMLERDDFDKRYKSNQSIAIHEFLYPLVQGYDSVALKADVELGGTDQKFNLLMGRELQRAYGQEPQCILTMPLLEGLDGVKKMSKSLGNYVGIQEAPGIMYSKLVSIPDSLMWRYFELLSFRSMEEIDGLKADCEAGANPRDIKIKLAEELVARFHGEEAAANAHRSAGNRMKEGELPDDLPELSVAAAEDMPISAVLNKAGLVKNAAVARDLLASGGVRIDGEVVDRSFVFKLGTTHVCQAGKKAFGRVTLVSEESSN</sequence>
<name>SYY_PSEU2</name>
<comment type="function">
    <text evidence="1">Catalyzes the attachment of tyrosine to tRNA(Tyr) in a two-step reaction: tyrosine is first activated by ATP to form Tyr-AMP and then transferred to the acceptor end of tRNA(Tyr).</text>
</comment>
<comment type="catalytic activity">
    <reaction evidence="1">
        <text>tRNA(Tyr) + L-tyrosine + ATP = L-tyrosyl-tRNA(Tyr) + AMP + diphosphate + H(+)</text>
        <dbReference type="Rhea" id="RHEA:10220"/>
        <dbReference type="Rhea" id="RHEA-COMP:9706"/>
        <dbReference type="Rhea" id="RHEA-COMP:9707"/>
        <dbReference type="ChEBI" id="CHEBI:15378"/>
        <dbReference type="ChEBI" id="CHEBI:30616"/>
        <dbReference type="ChEBI" id="CHEBI:33019"/>
        <dbReference type="ChEBI" id="CHEBI:58315"/>
        <dbReference type="ChEBI" id="CHEBI:78442"/>
        <dbReference type="ChEBI" id="CHEBI:78536"/>
        <dbReference type="ChEBI" id="CHEBI:456215"/>
        <dbReference type="EC" id="6.1.1.1"/>
    </reaction>
</comment>
<comment type="subunit">
    <text evidence="1">Homodimer.</text>
</comment>
<comment type="subcellular location">
    <subcellularLocation>
        <location evidence="1">Cytoplasm</location>
    </subcellularLocation>
</comment>
<comment type="similarity">
    <text evidence="1">Belongs to the class-I aminoacyl-tRNA synthetase family. TyrS type 2 subfamily.</text>
</comment>
<dbReference type="EC" id="6.1.1.1" evidence="1"/>
<dbReference type="EMBL" id="CP000075">
    <property type="protein sequence ID" value="AAY39595.1"/>
    <property type="molecule type" value="Genomic_DNA"/>
</dbReference>
<dbReference type="RefSeq" id="WP_011269097.1">
    <property type="nucleotide sequence ID" value="NC_007005.1"/>
</dbReference>
<dbReference type="RefSeq" id="YP_237633.1">
    <property type="nucleotide sequence ID" value="NC_007005.1"/>
</dbReference>
<dbReference type="SMR" id="Q4ZMM7"/>
<dbReference type="STRING" id="205918.Psyr_4565"/>
<dbReference type="KEGG" id="psb:Psyr_4565"/>
<dbReference type="PATRIC" id="fig|205918.7.peg.4704"/>
<dbReference type="eggNOG" id="COG0162">
    <property type="taxonomic scope" value="Bacteria"/>
</dbReference>
<dbReference type="HOGENOM" id="CLU_024003_5_0_6"/>
<dbReference type="OrthoDB" id="9804243at2"/>
<dbReference type="Proteomes" id="UP000000426">
    <property type="component" value="Chromosome"/>
</dbReference>
<dbReference type="GO" id="GO:0005829">
    <property type="term" value="C:cytosol"/>
    <property type="evidence" value="ECO:0007669"/>
    <property type="project" value="TreeGrafter"/>
</dbReference>
<dbReference type="GO" id="GO:0005524">
    <property type="term" value="F:ATP binding"/>
    <property type="evidence" value="ECO:0007669"/>
    <property type="project" value="UniProtKB-UniRule"/>
</dbReference>
<dbReference type="GO" id="GO:0003723">
    <property type="term" value="F:RNA binding"/>
    <property type="evidence" value="ECO:0007669"/>
    <property type="project" value="UniProtKB-KW"/>
</dbReference>
<dbReference type="GO" id="GO:0004831">
    <property type="term" value="F:tyrosine-tRNA ligase activity"/>
    <property type="evidence" value="ECO:0007669"/>
    <property type="project" value="UniProtKB-UniRule"/>
</dbReference>
<dbReference type="GO" id="GO:0006437">
    <property type="term" value="P:tyrosyl-tRNA aminoacylation"/>
    <property type="evidence" value="ECO:0007669"/>
    <property type="project" value="UniProtKB-UniRule"/>
</dbReference>
<dbReference type="CDD" id="cd00165">
    <property type="entry name" value="S4"/>
    <property type="match status" value="1"/>
</dbReference>
<dbReference type="CDD" id="cd00805">
    <property type="entry name" value="TyrRS_core"/>
    <property type="match status" value="1"/>
</dbReference>
<dbReference type="FunFam" id="1.10.240.10:FF:000006">
    <property type="entry name" value="Tyrosine--tRNA ligase"/>
    <property type="match status" value="1"/>
</dbReference>
<dbReference type="FunFam" id="3.40.50.620:FF:000061">
    <property type="entry name" value="Tyrosine--tRNA ligase"/>
    <property type="match status" value="1"/>
</dbReference>
<dbReference type="Gene3D" id="3.40.50.620">
    <property type="entry name" value="HUPs"/>
    <property type="match status" value="1"/>
</dbReference>
<dbReference type="Gene3D" id="3.10.290.10">
    <property type="entry name" value="RNA-binding S4 domain"/>
    <property type="match status" value="1"/>
</dbReference>
<dbReference type="Gene3D" id="1.10.240.10">
    <property type="entry name" value="Tyrosyl-Transfer RNA Synthetase"/>
    <property type="match status" value="1"/>
</dbReference>
<dbReference type="HAMAP" id="MF_02007">
    <property type="entry name" value="Tyr_tRNA_synth_type2"/>
    <property type="match status" value="1"/>
</dbReference>
<dbReference type="InterPro" id="IPR001412">
    <property type="entry name" value="aa-tRNA-synth_I_CS"/>
</dbReference>
<dbReference type="InterPro" id="IPR002305">
    <property type="entry name" value="aa-tRNA-synth_Ic"/>
</dbReference>
<dbReference type="InterPro" id="IPR014729">
    <property type="entry name" value="Rossmann-like_a/b/a_fold"/>
</dbReference>
<dbReference type="InterPro" id="IPR002942">
    <property type="entry name" value="S4_RNA-bd"/>
</dbReference>
<dbReference type="InterPro" id="IPR036986">
    <property type="entry name" value="S4_RNA-bd_sf"/>
</dbReference>
<dbReference type="InterPro" id="IPR002307">
    <property type="entry name" value="Tyr-tRNA-ligase"/>
</dbReference>
<dbReference type="InterPro" id="IPR024088">
    <property type="entry name" value="Tyr-tRNA-ligase_bac-type"/>
</dbReference>
<dbReference type="InterPro" id="IPR024108">
    <property type="entry name" value="Tyr-tRNA-ligase_bac_2"/>
</dbReference>
<dbReference type="NCBIfam" id="TIGR00234">
    <property type="entry name" value="tyrS"/>
    <property type="match status" value="1"/>
</dbReference>
<dbReference type="PANTHER" id="PTHR11766:SF1">
    <property type="entry name" value="TYROSINE--TRNA LIGASE"/>
    <property type="match status" value="1"/>
</dbReference>
<dbReference type="PANTHER" id="PTHR11766">
    <property type="entry name" value="TYROSYL-TRNA SYNTHETASE"/>
    <property type="match status" value="1"/>
</dbReference>
<dbReference type="Pfam" id="PF01479">
    <property type="entry name" value="S4"/>
    <property type="match status" value="1"/>
</dbReference>
<dbReference type="Pfam" id="PF00579">
    <property type="entry name" value="tRNA-synt_1b"/>
    <property type="match status" value="1"/>
</dbReference>
<dbReference type="PRINTS" id="PR01040">
    <property type="entry name" value="TRNASYNTHTYR"/>
</dbReference>
<dbReference type="SUPFAM" id="SSF55174">
    <property type="entry name" value="Alpha-L RNA-binding motif"/>
    <property type="match status" value="1"/>
</dbReference>
<dbReference type="SUPFAM" id="SSF52374">
    <property type="entry name" value="Nucleotidylyl transferase"/>
    <property type="match status" value="1"/>
</dbReference>
<dbReference type="PROSITE" id="PS00178">
    <property type="entry name" value="AA_TRNA_LIGASE_I"/>
    <property type="match status" value="1"/>
</dbReference>
<dbReference type="PROSITE" id="PS50889">
    <property type="entry name" value="S4"/>
    <property type="match status" value="1"/>
</dbReference>
<organism>
    <name type="scientific">Pseudomonas syringae pv. syringae (strain B728a)</name>
    <dbReference type="NCBI Taxonomy" id="205918"/>
    <lineage>
        <taxon>Bacteria</taxon>
        <taxon>Pseudomonadati</taxon>
        <taxon>Pseudomonadota</taxon>
        <taxon>Gammaproteobacteria</taxon>
        <taxon>Pseudomonadales</taxon>
        <taxon>Pseudomonadaceae</taxon>
        <taxon>Pseudomonas</taxon>
        <taxon>Pseudomonas syringae</taxon>
    </lineage>
</organism>